<proteinExistence type="inferred from homology"/>
<reference key="1">
    <citation type="journal article" date="2008" name="J. Bacteriol.">
        <title>Complete genome sequence of the mosquitocidal bacterium Bacillus sphaericus C3-41 and comparison with those of closely related Bacillus species.</title>
        <authorList>
            <person name="Hu X."/>
            <person name="Fan W."/>
            <person name="Han B."/>
            <person name="Liu H."/>
            <person name="Zheng D."/>
            <person name="Li Q."/>
            <person name="Dong W."/>
            <person name="Yan J."/>
            <person name="Gao M."/>
            <person name="Berry C."/>
            <person name="Yuan Z."/>
        </authorList>
    </citation>
    <scope>NUCLEOTIDE SEQUENCE [LARGE SCALE GENOMIC DNA]</scope>
    <source>
        <strain>C3-41</strain>
    </source>
</reference>
<sequence length="234" mass="26416">MAKTKAEHVHEVFESISDNYDKMNGVISFQMHIGWRNDTMKHMAVKPGSKALDVCCGTADWTIALAEAVGESGEVKGLDFSQNMLKVGEKKVQPYPQIELIHGNAMELPFPDDTFDYVTIGFGLRNVPDYLQVLKEMHRVVKPGGMVVCLETSQSEIPGYRQLFRFYFKYIMPIFGKIFAKSYKEYSWLQESANDFPGMKKLAALFEQAGLEKVTYKAYSGGAAAMHIGFKKIR</sequence>
<protein>
    <recommendedName>
        <fullName evidence="1">Demethylmenaquinone methyltransferase</fullName>
        <ecNumber evidence="1">2.1.1.163</ecNumber>
    </recommendedName>
</protein>
<dbReference type="EC" id="2.1.1.163" evidence="1"/>
<dbReference type="EMBL" id="CP000817">
    <property type="protein sequence ID" value="ACA39522.1"/>
    <property type="molecule type" value="Genomic_DNA"/>
</dbReference>
<dbReference type="RefSeq" id="WP_012293618.1">
    <property type="nucleotide sequence ID" value="NC_010382.1"/>
</dbReference>
<dbReference type="SMR" id="B1HTA6"/>
<dbReference type="EnsemblBacteria" id="ACA39522">
    <property type="protein sequence ID" value="ACA39522"/>
    <property type="gene ID" value="Bsph_1933"/>
</dbReference>
<dbReference type="KEGG" id="lsp:Bsph_1933"/>
<dbReference type="HOGENOM" id="CLU_037990_0_0_9"/>
<dbReference type="UniPathway" id="UPA00079">
    <property type="reaction ID" value="UER00169"/>
</dbReference>
<dbReference type="Proteomes" id="UP000002164">
    <property type="component" value="Chromosome"/>
</dbReference>
<dbReference type="GO" id="GO:0043770">
    <property type="term" value="F:demethylmenaquinone methyltransferase activity"/>
    <property type="evidence" value="ECO:0007669"/>
    <property type="project" value="UniProtKB-UniRule"/>
</dbReference>
<dbReference type="GO" id="GO:0009234">
    <property type="term" value="P:menaquinone biosynthetic process"/>
    <property type="evidence" value="ECO:0007669"/>
    <property type="project" value="UniProtKB-UniRule"/>
</dbReference>
<dbReference type="GO" id="GO:0032259">
    <property type="term" value="P:methylation"/>
    <property type="evidence" value="ECO:0007669"/>
    <property type="project" value="UniProtKB-KW"/>
</dbReference>
<dbReference type="CDD" id="cd02440">
    <property type="entry name" value="AdoMet_MTases"/>
    <property type="match status" value="1"/>
</dbReference>
<dbReference type="FunFam" id="3.40.50.150:FF:000086">
    <property type="entry name" value="Demethylmenaquinone methyltransferase"/>
    <property type="match status" value="1"/>
</dbReference>
<dbReference type="Gene3D" id="3.40.50.150">
    <property type="entry name" value="Vaccinia Virus protein VP39"/>
    <property type="match status" value="1"/>
</dbReference>
<dbReference type="HAMAP" id="MF_01813">
    <property type="entry name" value="MenG_UbiE_methyltr"/>
    <property type="match status" value="1"/>
</dbReference>
<dbReference type="InterPro" id="IPR029063">
    <property type="entry name" value="SAM-dependent_MTases_sf"/>
</dbReference>
<dbReference type="InterPro" id="IPR004033">
    <property type="entry name" value="UbiE/COQ5_MeTrFase"/>
</dbReference>
<dbReference type="InterPro" id="IPR023576">
    <property type="entry name" value="UbiE/COQ5_MeTrFase_CS"/>
</dbReference>
<dbReference type="NCBIfam" id="TIGR01934">
    <property type="entry name" value="MenG_MenH_UbiE"/>
    <property type="match status" value="1"/>
</dbReference>
<dbReference type="NCBIfam" id="NF001243">
    <property type="entry name" value="PRK00216.1-4"/>
    <property type="match status" value="1"/>
</dbReference>
<dbReference type="NCBIfam" id="NF001244">
    <property type="entry name" value="PRK00216.1-5"/>
    <property type="match status" value="1"/>
</dbReference>
<dbReference type="PANTHER" id="PTHR43591:SF24">
    <property type="entry name" value="2-METHOXY-6-POLYPRENYL-1,4-BENZOQUINOL METHYLASE, MITOCHONDRIAL"/>
    <property type="match status" value="1"/>
</dbReference>
<dbReference type="PANTHER" id="PTHR43591">
    <property type="entry name" value="METHYLTRANSFERASE"/>
    <property type="match status" value="1"/>
</dbReference>
<dbReference type="Pfam" id="PF01209">
    <property type="entry name" value="Ubie_methyltran"/>
    <property type="match status" value="1"/>
</dbReference>
<dbReference type="SUPFAM" id="SSF53335">
    <property type="entry name" value="S-adenosyl-L-methionine-dependent methyltransferases"/>
    <property type="match status" value="1"/>
</dbReference>
<dbReference type="PROSITE" id="PS51608">
    <property type="entry name" value="SAM_MT_UBIE"/>
    <property type="match status" value="1"/>
</dbReference>
<dbReference type="PROSITE" id="PS01183">
    <property type="entry name" value="UBIE_1"/>
    <property type="match status" value="1"/>
</dbReference>
<dbReference type="PROSITE" id="PS01184">
    <property type="entry name" value="UBIE_2"/>
    <property type="match status" value="1"/>
</dbReference>
<keyword id="KW-0474">Menaquinone biosynthesis</keyword>
<keyword id="KW-0489">Methyltransferase</keyword>
<keyword id="KW-0949">S-adenosyl-L-methionine</keyword>
<keyword id="KW-0808">Transferase</keyword>
<accession>B1HTA6</accession>
<feature type="chain" id="PRO_1000187776" description="Demethylmenaquinone methyltransferase">
    <location>
        <begin position="1"/>
        <end position="234"/>
    </location>
</feature>
<feature type="binding site" evidence="1">
    <location>
        <position position="58"/>
    </location>
    <ligand>
        <name>S-adenosyl-L-methionine</name>
        <dbReference type="ChEBI" id="CHEBI:59789"/>
    </ligand>
</feature>
<feature type="binding site" evidence="1">
    <location>
        <position position="79"/>
    </location>
    <ligand>
        <name>S-adenosyl-L-methionine</name>
        <dbReference type="ChEBI" id="CHEBI:59789"/>
    </ligand>
</feature>
<feature type="binding site" evidence="1">
    <location>
        <begin position="104"/>
        <end position="105"/>
    </location>
    <ligand>
        <name>S-adenosyl-L-methionine</name>
        <dbReference type="ChEBI" id="CHEBI:59789"/>
    </ligand>
</feature>
<comment type="function">
    <text evidence="1">Methyltransferase required for the conversion of demethylmenaquinol (DMKH2) to menaquinol (MKH2).</text>
</comment>
<comment type="catalytic activity">
    <reaction evidence="1">
        <text>a 2-demethylmenaquinol + S-adenosyl-L-methionine = a menaquinol + S-adenosyl-L-homocysteine + H(+)</text>
        <dbReference type="Rhea" id="RHEA:42640"/>
        <dbReference type="Rhea" id="RHEA-COMP:9539"/>
        <dbReference type="Rhea" id="RHEA-COMP:9563"/>
        <dbReference type="ChEBI" id="CHEBI:15378"/>
        <dbReference type="ChEBI" id="CHEBI:18151"/>
        <dbReference type="ChEBI" id="CHEBI:55437"/>
        <dbReference type="ChEBI" id="CHEBI:57856"/>
        <dbReference type="ChEBI" id="CHEBI:59789"/>
        <dbReference type="EC" id="2.1.1.163"/>
    </reaction>
</comment>
<comment type="pathway">
    <text evidence="1">Quinol/quinone metabolism; menaquinone biosynthesis; menaquinol from 1,4-dihydroxy-2-naphthoate: step 2/2.</text>
</comment>
<comment type="similarity">
    <text evidence="1">Belongs to the class I-like SAM-binding methyltransferase superfamily. MenG/UbiE family.</text>
</comment>
<gene>
    <name evidence="1" type="primary">menG</name>
    <name type="ordered locus">Bsph_1933</name>
</gene>
<organism>
    <name type="scientific">Lysinibacillus sphaericus (strain C3-41)</name>
    <dbReference type="NCBI Taxonomy" id="444177"/>
    <lineage>
        <taxon>Bacteria</taxon>
        <taxon>Bacillati</taxon>
        <taxon>Bacillota</taxon>
        <taxon>Bacilli</taxon>
        <taxon>Bacillales</taxon>
        <taxon>Bacillaceae</taxon>
        <taxon>Lysinibacillus</taxon>
    </lineage>
</organism>
<evidence type="ECO:0000255" key="1">
    <source>
        <dbReference type="HAMAP-Rule" id="MF_01813"/>
    </source>
</evidence>
<name>MENG_LYSSC</name>